<proteinExistence type="inferred from homology"/>
<reference key="1">
    <citation type="submission" date="2009-03" db="EMBL/GenBank/DDBJ databases">
        <title>Brucella melitensis ATCC 23457 whole genome shotgun sequencing project.</title>
        <authorList>
            <person name="Setubal J.C."/>
            <person name="Boyle S."/>
            <person name="Crasta O.R."/>
            <person name="Gillespie J.J."/>
            <person name="Kenyon R.W."/>
            <person name="Lu J."/>
            <person name="Mane S."/>
            <person name="Nagrani S."/>
            <person name="Shallom J.M."/>
            <person name="Shallom S."/>
            <person name="Shukla M."/>
            <person name="Snyder E.E."/>
            <person name="Sobral B.W."/>
            <person name="Wattam A.R."/>
            <person name="Will R."/>
            <person name="Williams K."/>
            <person name="Yoo H."/>
            <person name="Munk C."/>
            <person name="Tapia R."/>
            <person name="Han C."/>
            <person name="Detter J.C."/>
            <person name="Bruce D."/>
            <person name="Brettin T.S."/>
        </authorList>
    </citation>
    <scope>NUCLEOTIDE SEQUENCE [LARGE SCALE GENOMIC DNA]</scope>
    <source>
        <strain>ATCC 23457</strain>
    </source>
</reference>
<sequence length="246" mass="26466">MPAKLSVNLNAIAMLRNRRDLPWPSVTGLGRAALAAGAAGLTVHPRPDQRHIRFSDLGDIRALIDDEYPQAEFNIEGFPSEAFLDLVEKHEPEQVTLVPDDPMQATSDHGWDFMSKADFLAPIVARLKGRGMRVSLFADPDSLGYERAKAIGADRVELYTGPYGATHDDPAAAARELDRLEKAARAATALGLAVNAGHDLTVDNLPALVKRIPQLAEVSIGHGLTADALMYGIPVTVSRYITALAG</sequence>
<protein>
    <recommendedName>
        <fullName evidence="1">Pyridoxine 5'-phosphate synthase</fullName>
        <shortName evidence="1">PNP synthase</shortName>
        <ecNumber evidence="1">2.6.99.2</ecNumber>
    </recommendedName>
</protein>
<comment type="function">
    <text evidence="1">Catalyzes the complicated ring closure reaction between the two acyclic compounds 1-deoxy-D-xylulose-5-phosphate (DXP) and 3-amino-2-oxopropyl phosphate (1-amino-acetone-3-phosphate or AAP) to form pyridoxine 5'-phosphate (PNP) and inorganic phosphate.</text>
</comment>
<comment type="catalytic activity">
    <reaction evidence="1">
        <text>3-amino-2-oxopropyl phosphate + 1-deoxy-D-xylulose 5-phosphate = pyridoxine 5'-phosphate + phosphate + 2 H2O + H(+)</text>
        <dbReference type="Rhea" id="RHEA:15265"/>
        <dbReference type="ChEBI" id="CHEBI:15377"/>
        <dbReference type="ChEBI" id="CHEBI:15378"/>
        <dbReference type="ChEBI" id="CHEBI:43474"/>
        <dbReference type="ChEBI" id="CHEBI:57279"/>
        <dbReference type="ChEBI" id="CHEBI:57792"/>
        <dbReference type="ChEBI" id="CHEBI:58589"/>
        <dbReference type="EC" id="2.6.99.2"/>
    </reaction>
</comment>
<comment type="pathway">
    <text evidence="1">Cofactor biosynthesis; pyridoxine 5'-phosphate biosynthesis; pyridoxine 5'-phosphate from D-erythrose 4-phosphate: step 5/5.</text>
</comment>
<comment type="subunit">
    <text evidence="1">Homooctamer; tetramer of dimers.</text>
</comment>
<comment type="subcellular location">
    <subcellularLocation>
        <location evidence="1">Cytoplasm</location>
    </subcellularLocation>
</comment>
<comment type="similarity">
    <text evidence="1">Belongs to the PNP synthase family.</text>
</comment>
<keyword id="KW-0963">Cytoplasm</keyword>
<keyword id="KW-0664">Pyridoxine biosynthesis</keyword>
<keyword id="KW-0808">Transferase</keyword>
<evidence type="ECO:0000255" key="1">
    <source>
        <dbReference type="HAMAP-Rule" id="MF_00279"/>
    </source>
</evidence>
<gene>
    <name evidence="1" type="primary">pdxJ</name>
    <name type="ordered locus">BMEA_A1432</name>
</gene>
<dbReference type="EC" id="2.6.99.2" evidence="1"/>
<dbReference type="EMBL" id="CP001488">
    <property type="protein sequence ID" value="ACO01147.1"/>
    <property type="molecule type" value="Genomic_DNA"/>
</dbReference>
<dbReference type="RefSeq" id="WP_002964495.1">
    <property type="nucleotide sequence ID" value="NC_012441.1"/>
</dbReference>
<dbReference type="SMR" id="C0RE25"/>
<dbReference type="KEGG" id="bmi:BMEA_A1432"/>
<dbReference type="HOGENOM" id="CLU_074563_1_0_5"/>
<dbReference type="UniPathway" id="UPA00244">
    <property type="reaction ID" value="UER00313"/>
</dbReference>
<dbReference type="Proteomes" id="UP000001748">
    <property type="component" value="Chromosome I"/>
</dbReference>
<dbReference type="GO" id="GO:0005829">
    <property type="term" value="C:cytosol"/>
    <property type="evidence" value="ECO:0007669"/>
    <property type="project" value="TreeGrafter"/>
</dbReference>
<dbReference type="GO" id="GO:0033856">
    <property type="term" value="F:pyridoxine 5'-phosphate synthase activity"/>
    <property type="evidence" value="ECO:0007669"/>
    <property type="project" value="UniProtKB-EC"/>
</dbReference>
<dbReference type="GO" id="GO:0008615">
    <property type="term" value="P:pyridoxine biosynthetic process"/>
    <property type="evidence" value="ECO:0007669"/>
    <property type="project" value="UniProtKB-UniRule"/>
</dbReference>
<dbReference type="CDD" id="cd00003">
    <property type="entry name" value="PNPsynthase"/>
    <property type="match status" value="1"/>
</dbReference>
<dbReference type="Gene3D" id="3.20.20.70">
    <property type="entry name" value="Aldolase class I"/>
    <property type="match status" value="1"/>
</dbReference>
<dbReference type="HAMAP" id="MF_00279">
    <property type="entry name" value="PdxJ"/>
    <property type="match status" value="1"/>
</dbReference>
<dbReference type="InterPro" id="IPR013785">
    <property type="entry name" value="Aldolase_TIM"/>
</dbReference>
<dbReference type="InterPro" id="IPR004569">
    <property type="entry name" value="PyrdxlP_synth_PdxJ"/>
</dbReference>
<dbReference type="InterPro" id="IPR036130">
    <property type="entry name" value="Pyridoxine-5'_phos_synth"/>
</dbReference>
<dbReference type="NCBIfam" id="TIGR00559">
    <property type="entry name" value="pdxJ"/>
    <property type="match status" value="1"/>
</dbReference>
<dbReference type="NCBIfam" id="NF003626">
    <property type="entry name" value="PRK05265.1-4"/>
    <property type="match status" value="1"/>
</dbReference>
<dbReference type="PANTHER" id="PTHR30456">
    <property type="entry name" value="PYRIDOXINE 5'-PHOSPHATE SYNTHASE"/>
    <property type="match status" value="1"/>
</dbReference>
<dbReference type="PANTHER" id="PTHR30456:SF0">
    <property type="entry name" value="PYRIDOXINE 5'-PHOSPHATE SYNTHASE"/>
    <property type="match status" value="1"/>
</dbReference>
<dbReference type="Pfam" id="PF03740">
    <property type="entry name" value="PdxJ"/>
    <property type="match status" value="1"/>
</dbReference>
<dbReference type="SUPFAM" id="SSF63892">
    <property type="entry name" value="Pyridoxine 5'-phosphate synthase"/>
    <property type="match status" value="1"/>
</dbReference>
<name>PDXJ_BRUMB</name>
<feature type="chain" id="PRO_1000132545" description="Pyridoxine 5'-phosphate synthase">
    <location>
        <begin position="1"/>
        <end position="246"/>
    </location>
</feature>
<feature type="active site" description="Proton acceptor" evidence="1">
    <location>
        <position position="44"/>
    </location>
</feature>
<feature type="active site" description="Proton acceptor" evidence="1">
    <location>
        <position position="76"/>
    </location>
</feature>
<feature type="active site" description="Proton donor" evidence="1">
    <location>
        <position position="198"/>
    </location>
</feature>
<feature type="binding site" evidence="1">
    <location>
        <position position="8"/>
    </location>
    <ligand>
        <name>3-amino-2-oxopropyl phosphate</name>
        <dbReference type="ChEBI" id="CHEBI:57279"/>
    </ligand>
</feature>
<feature type="binding site" evidence="1">
    <location>
        <position position="19"/>
    </location>
    <ligand>
        <name>3-amino-2-oxopropyl phosphate</name>
        <dbReference type="ChEBI" id="CHEBI:57279"/>
    </ligand>
</feature>
<feature type="binding site" evidence="1">
    <location>
        <position position="46"/>
    </location>
    <ligand>
        <name>1-deoxy-D-xylulose 5-phosphate</name>
        <dbReference type="ChEBI" id="CHEBI:57792"/>
    </ligand>
</feature>
<feature type="binding site" evidence="1">
    <location>
        <position position="51"/>
    </location>
    <ligand>
        <name>1-deoxy-D-xylulose 5-phosphate</name>
        <dbReference type="ChEBI" id="CHEBI:57792"/>
    </ligand>
</feature>
<feature type="binding site" evidence="1">
    <location>
        <position position="106"/>
    </location>
    <ligand>
        <name>1-deoxy-D-xylulose 5-phosphate</name>
        <dbReference type="ChEBI" id="CHEBI:57792"/>
    </ligand>
</feature>
<feature type="binding site" evidence="1">
    <location>
        <position position="199"/>
    </location>
    <ligand>
        <name>3-amino-2-oxopropyl phosphate</name>
        <dbReference type="ChEBI" id="CHEBI:57279"/>
    </ligand>
</feature>
<feature type="binding site" evidence="1">
    <location>
        <begin position="221"/>
        <end position="222"/>
    </location>
    <ligand>
        <name>3-amino-2-oxopropyl phosphate</name>
        <dbReference type="ChEBI" id="CHEBI:57279"/>
    </ligand>
</feature>
<feature type="site" description="Transition state stabilizer" evidence="1">
    <location>
        <position position="157"/>
    </location>
</feature>
<accession>C0RE25</accession>
<organism>
    <name type="scientific">Brucella melitensis biotype 2 (strain ATCC 23457)</name>
    <dbReference type="NCBI Taxonomy" id="546272"/>
    <lineage>
        <taxon>Bacteria</taxon>
        <taxon>Pseudomonadati</taxon>
        <taxon>Pseudomonadota</taxon>
        <taxon>Alphaproteobacteria</taxon>
        <taxon>Hyphomicrobiales</taxon>
        <taxon>Brucellaceae</taxon>
        <taxon>Brucella/Ochrobactrum group</taxon>
        <taxon>Brucella</taxon>
    </lineage>
</organism>